<protein>
    <recommendedName>
        <fullName evidence="1">Elongation factor Ts</fullName>
        <shortName evidence="1">EF-Ts</shortName>
    </recommendedName>
</protein>
<keyword id="KW-0963">Cytoplasm</keyword>
<keyword id="KW-0251">Elongation factor</keyword>
<keyword id="KW-0648">Protein biosynthesis</keyword>
<name>EFTS_THEM4</name>
<gene>
    <name evidence="1" type="primary">tsf</name>
    <name type="ordered locus">Tmel_0786</name>
</gene>
<evidence type="ECO:0000255" key="1">
    <source>
        <dbReference type="HAMAP-Rule" id="MF_00050"/>
    </source>
</evidence>
<dbReference type="EMBL" id="CP000716">
    <property type="protein sequence ID" value="ABR30648.1"/>
    <property type="molecule type" value="Genomic_DNA"/>
</dbReference>
<dbReference type="RefSeq" id="WP_012057009.1">
    <property type="nucleotide sequence ID" value="NC_009616.1"/>
</dbReference>
<dbReference type="SMR" id="A6LL47"/>
<dbReference type="STRING" id="391009.Tmel_0786"/>
<dbReference type="KEGG" id="tme:Tmel_0786"/>
<dbReference type="eggNOG" id="COG0264">
    <property type="taxonomic scope" value="Bacteria"/>
</dbReference>
<dbReference type="HOGENOM" id="CLU_047155_1_1_0"/>
<dbReference type="OrthoDB" id="9808348at2"/>
<dbReference type="Proteomes" id="UP000001110">
    <property type="component" value="Chromosome"/>
</dbReference>
<dbReference type="GO" id="GO:0005737">
    <property type="term" value="C:cytoplasm"/>
    <property type="evidence" value="ECO:0007669"/>
    <property type="project" value="UniProtKB-SubCell"/>
</dbReference>
<dbReference type="GO" id="GO:0003746">
    <property type="term" value="F:translation elongation factor activity"/>
    <property type="evidence" value="ECO:0007669"/>
    <property type="project" value="UniProtKB-UniRule"/>
</dbReference>
<dbReference type="CDD" id="cd14275">
    <property type="entry name" value="UBA_EF-Ts"/>
    <property type="match status" value="1"/>
</dbReference>
<dbReference type="FunFam" id="1.10.286.20:FF:000001">
    <property type="entry name" value="Elongation factor Ts"/>
    <property type="match status" value="1"/>
</dbReference>
<dbReference type="FunFam" id="1.10.8.10:FF:000001">
    <property type="entry name" value="Elongation factor Ts"/>
    <property type="match status" value="1"/>
</dbReference>
<dbReference type="Gene3D" id="1.10.286.20">
    <property type="match status" value="1"/>
</dbReference>
<dbReference type="Gene3D" id="1.10.8.10">
    <property type="entry name" value="DNA helicase RuvA subunit, C-terminal domain"/>
    <property type="match status" value="1"/>
</dbReference>
<dbReference type="Gene3D" id="3.30.479.20">
    <property type="entry name" value="Elongation factor Ts, dimerisation domain"/>
    <property type="match status" value="1"/>
</dbReference>
<dbReference type="HAMAP" id="MF_00050">
    <property type="entry name" value="EF_Ts"/>
    <property type="match status" value="1"/>
</dbReference>
<dbReference type="InterPro" id="IPR036402">
    <property type="entry name" value="EF-Ts_dimer_sf"/>
</dbReference>
<dbReference type="InterPro" id="IPR001816">
    <property type="entry name" value="Transl_elong_EFTs/EF1B"/>
</dbReference>
<dbReference type="InterPro" id="IPR014039">
    <property type="entry name" value="Transl_elong_EFTs/EF1B_dimer"/>
</dbReference>
<dbReference type="InterPro" id="IPR018101">
    <property type="entry name" value="Transl_elong_Ts_CS"/>
</dbReference>
<dbReference type="InterPro" id="IPR009060">
    <property type="entry name" value="UBA-like_sf"/>
</dbReference>
<dbReference type="NCBIfam" id="TIGR00116">
    <property type="entry name" value="tsf"/>
    <property type="match status" value="2"/>
</dbReference>
<dbReference type="PANTHER" id="PTHR11741">
    <property type="entry name" value="ELONGATION FACTOR TS"/>
    <property type="match status" value="1"/>
</dbReference>
<dbReference type="PANTHER" id="PTHR11741:SF0">
    <property type="entry name" value="ELONGATION FACTOR TS, MITOCHONDRIAL"/>
    <property type="match status" value="1"/>
</dbReference>
<dbReference type="Pfam" id="PF00889">
    <property type="entry name" value="EF_TS"/>
    <property type="match status" value="1"/>
</dbReference>
<dbReference type="SUPFAM" id="SSF54713">
    <property type="entry name" value="Elongation factor Ts (EF-Ts), dimerisation domain"/>
    <property type="match status" value="1"/>
</dbReference>
<dbReference type="SUPFAM" id="SSF46934">
    <property type="entry name" value="UBA-like"/>
    <property type="match status" value="1"/>
</dbReference>
<dbReference type="PROSITE" id="PS01126">
    <property type="entry name" value="EF_TS_1"/>
    <property type="match status" value="1"/>
</dbReference>
<dbReference type="PROSITE" id="PS01127">
    <property type="entry name" value="EF_TS_2"/>
    <property type="match status" value="1"/>
</dbReference>
<accession>A6LL47</accession>
<comment type="function">
    <text evidence="1">Associates with the EF-Tu.GDP complex and induces the exchange of GDP to GTP. It remains bound to the aminoacyl-tRNA.EF-Tu.GTP complex up to the GTP hydrolysis stage on the ribosome.</text>
</comment>
<comment type="subcellular location">
    <subcellularLocation>
        <location evidence="1">Cytoplasm</location>
    </subcellularLocation>
</comment>
<comment type="similarity">
    <text evidence="1">Belongs to the EF-Ts family.</text>
</comment>
<sequence length="196" mass="22426">MISAKLVKELRDRTGAGMMECKKALEEANGDIEKAIEVLRKRGIAKAAKKASRETGEGIIASYVHFNKKIGVLVELNCETDFVARTEEFQELGNKIAMHVAAMSPRWVKREDVPQEVIEKEKEIYREQLKDSGKPEHVIEKIIEGKLNKFFEENCLYEQKFAFDEEKMVEDMIKEAIAKIGENIKVSRFVKFTVGE</sequence>
<organism>
    <name type="scientific">Thermosipho melanesiensis (strain DSM 12029 / CIP 104789 / BI429)</name>
    <dbReference type="NCBI Taxonomy" id="391009"/>
    <lineage>
        <taxon>Bacteria</taxon>
        <taxon>Thermotogati</taxon>
        <taxon>Thermotogota</taxon>
        <taxon>Thermotogae</taxon>
        <taxon>Thermotogales</taxon>
        <taxon>Fervidobacteriaceae</taxon>
        <taxon>Thermosipho</taxon>
    </lineage>
</organism>
<feature type="chain" id="PRO_0000323473" description="Elongation factor Ts">
    <location>
        <begin position="1"/>
        <end position="196"/>
    </location>
</feature>
<feature type="region of interest" description="Involved in Mg(2+) ion dislocation from EF-Tu" evidence="1">
    <location>
        <begin position="80"/>
        <end position="83"/>
    </location>
</feature>
<proteinExistence type="inferred from homology"/>
<reference key="1">
    <citation type="submission" date="2007-05" db="EMBL/GenBank/DDBJ databases">
        <title>Complete sequence of Thermosipho melanesiensis BI429.</title>
        <authorList>
            <consortium name="US DOE Joint Genome Institute"/>
            <person name="Copeland A."/>
            <person name="Lucas S."/>
            <person name="Lapidus A."/>
            <person name="Barry K."/>
            <person name="Glavina del Rio T."/>
            <person name="Dalin E."/>
            <person name="Tice H."/>
            <person name="Pitluck S."/>
            <person name="Chertkov O."/>
            <person name="Brettin T."/>
            <person name="Bruce D."/>
            <person name="Detter J.C."/>
            <person name="Han C."/>
            <person name="Schmutz J."/>
            <person name="Larimer F."/>
            <person name="Land M."/>
            <person name="Hauser L."/>
            <person name="Kyrpides N."/>
            <person name="Mikhailova N."/>
            <person name="Nelson K."/>
            <person name="Gogarten J.P."/>
            <person name="Noll K."/>
            <person name="Richardson P."/>
        </authorList>
    </citation>
    <scope>NUCLEOTIDE SEQUENCE [LARGE SCALE GENOMIC DNA]</scope>
    <source>
        <strain>DSM 12029 / CIP 104789 / BI429</strain>
    </source>
</reference>